<feature type="chain" id="PRO_0000370129" description="3-deoxy-manno-octulosonate cytidylyltransferase">
    <location>
        <begin position="1"/>
        <end position="251"/>
    </location>
</feature>
<comment type="function">
    <text evidence="1">Activates KDO (a required 8-carbon sugar) for incorporation into bacterial lipopolysaccharide in Gram-negative bacteria.</text>
</comment>
<comment type="catalytic activity">
    <reaction evidence="1">
        <text>3-deoxy-alpha-D-manno-oct-2-ulosonate + CTP = CMP-3-deoxy-beta-D-manno-octulosonate + diphosphate</text>
        <dbReference type="Rhea" id="RHEA:23448"/>
        <dbReference type="ChEBI" id="CHEBI:33019"/>
        <dbReference type="ChEBI" id="CHEBI:37563"/>
        <dbReference type="ChEBI" id="CHEBI:85986"/>
        <dbReference type="ChEBI" id="CHEBI:85987"/>
        <dbReference type="EC" id="2.7.7.38"/>
    </reaction>
</comment>
<comment type="pathway">
    <text evidence="1">Nucleotide-sugar biosynthesis; CMP-3-deoxy-D-manno-octulosonate biosynthesis; CMP-3-deoxy-D-manno-octulosonate from 3-deoxy-D-manno-octulosonate and CTP: step 1/1.</text>
</comment>
<comment type="pathway">
    <text evidence="1">Bacterial outer membrane biogenesis; lipopolysaccharide biosynthesis.</text>
</comment>
<comment type="subcellular location">
    <subcellularLocation>
        <location evidence="1">Cytoplasm</location>
    </subcellularLocation>
</comment>
<comment type="similarity">
    <text evidence="1">Belongs to the KdsB family.</text>
</comment>
<sequence length="251" mass="27451">MGDSNFDDVLVLIPARMASTRLPGKPLADICGLPMIVQVAMRAKEAEIGRVVVAVDDPQVFDTVAAAGFEVVMTSKDHQSGSDRIFEALKKIDPDGKAKFIVNVQGDLPTIEPETVRAALRPLENEAVDIGTLTIEIDNEEDKTAPHIVKVIGSPISDNRLRGLYFTRATAPYGKGPLYHHIGLYAYRRAALERFVSLGPSTLERRESLEQLRALEAGMRIDAEIVDTVPLGVDTPADLEKARRILSARQN</sequence>
<name>KDSB_RHIEC</name>
<organism>
    <name type="scientific">Rhizobium etli (strain ATCC 51251 / DSM 11541 / JCM 21823 / NBRC 15573 / CFN 42)</name>
    <dbReference type="NCBI Taxonomy" id="347834"/>
    <lineage>
        <taxon>Bacteria</taxon>
        <taxon>Pseudomonadati</taxon>
        <taxon>Pseudomonadota</taxon>
        <taxon>Alphaproteobacteria</taxon>
        <taxon>Hyphomicrobiales</taxon>
        <taxon>Rhizobiaceae</taxon>
        <taxon>Rhizobium/Agrobacterium group</taxon>
        <taxon>Rhizobium</taxon>
    </lineage>
</organism>
<proteinExistence type="inferred from homology"/>
<protein>
    <recommendedName>
        <fullName evidence="1">3-deoxy-manno-octulosonate cytidylyltransferase</fullName>
        <ecNumber evidence="1">2.7.7.38</ecNumber>
    </recommendedName>
    <alternativeName>
        <fullName evidence="1">CMP-2-keto-3-deoxyoctulosonic acid synthase</fullName>
        <shortName evidence="1">CKS</shortName>
        <shortName evidence="1">CMP-KDO synthase</shortName>
    </alternativeName>
</protein>
<keyword id="KW-0963">Cytoplasm</keyword>
<keyword id="KW-0448">Lipopolysaccharide biosynthesis</keyword>
<keyword id="KW-0548">Nucleotidyltransferase</keyword>
<keyword id="KW-1185">Reference proteome</keyword>
<keyword id="KW-0808">Transferase</keyword>
<gene>
    <name evidence="1" type="primary">kdsB</name>
    <name type="ordered locus">RHE_CH00132</name>
</gene>
<accession>Q2KDX9</accession>
<reference key="1">
    <citation type="journal article" date="2006" name="Proc. Natl. Acad. Sci. U.S.A.">
        <title>The partitioned Rhizobium etli genome: genetic and metabolic redundancy in seven interacting replicons.</title>
        <authorList>
            <person name="Gonzalez V."/>
            <person name="Santamaria R.I."/>
            <person name="Bustos P."/>
            <person name="Hernandez-Gonzalez I."/>
            <person name="Medrano-Soto A."/>
            <person name="Moreno-Hagelsieb G."/>
            <person name="Janga S.C."/>
            <person name="Ramirez M.A."/>
            <person name="Jimenez-Jacinto V."/>
            <person name="Collado-Vides J."/>
            <person name="Davila G."/>
        </authorList>
    </citation>
    <scope>NUCLEOTIDE SEQUENCE [LARGE SCALE GENOMIC DNA]</scope>
    <source>
        <strain>ATCC 51251 / DSM 11541 / JCM 21823 / NBRC 15573 / CFN 42</strain>
    </source>
</reference>
<evidence type="ECO:0000255" key="1">
    <source>
        <dbReference type="HAMAP-Rule" id="MF_00057"/>
    </source>
</evidence>
<dbReference type="EC" id="2.7.7.38" evidence="1"/>
<dbReference type="EMBL" id="CP000133">
    <property type="protein sequence ID" value="ABC88957.1"/>
    <property type="molecule type" value="Genomic_DNA"/>
</dbReference>
<dbReference type="RefSeq" id="WP_011423526.1">
    <property type="nucleotide sequence ID" value="NC_007761.1"/>
</dbReference>
<dbReference type="SMR" id="Q2KDX9"/>
<dbReference type="KEGG" id="ret:RHE_CH00132"/>
<dbReference type="eggNOG" id="COG1212">
    <property type="taxonomic scope" value="Bacteria"/>
</dbReference>
<dbReference type="HOGENOM" id="CLU_065038_0_1_5"/>
<dbReference type="OrthoDB" id="9815559at2"/>
<dbReference type="UniPathway" id="UPA00030"/>
<dbReference type="UniPathway" id="UPA00358">
    <property type="reaction ID" value="UER00476"/>
</dbReference>
<dbReference type="Proteomes" id="UP000001936">
    <property type="component" value="Chromosome"/>
</dbReference>
<dbReference type="GO" id="GO:0005829">
    <property type="term" value="C:cytosol"/>
    <property type="evidence" value="ECO:0007669"/>
    <property type="project" value="TreeGrafter"/>
</dbReference>
<dbReference type="GO" id="GO:0008690">
    <property type="term" value="F:3-deoxy-manno-octulosonate cytidylyltransferase activity"/>
    <property type="evidence" value="ECO:0007669"/>
    <property type="project" value="UniProtKB-UniRule"/>
</dbReference>
<dbReference type="GO" id="GO:0033468">
    <property type="term" value="P:CMP-keto-3-deoxy-D-manno-octulosonic acid biosynthetic process"/>
    <property type="evidence" value="ECO:0007669"/>
    <property type="project" value="UniProtKB-UniRule"/>
</dbReference>
<dbReference type="GO" id="GO:0009103">
    <property type="term" value="P:lipopolysaccharide biosynthetic process"/>
    <property type="evidence" value="ECO:0007669"/>
    <property type="project" value="UniProtKB-UniRule"/>
</dbReference>
<dbReference type="CDD" id="cd02517">
    <property type="entry name" value="CMP-KDO-Synthetase"/>
    <property type="match status" value="1"/>
</dbReference>
<dbReference type="Gene3D" id="3.90.550.10">
    <property type="entry name" value="Spore Coat Polysaccharide Biosynthesis Protein SpsA, Chain A"/>
    <property type="match status" value="1"/>
</dbReference>
<dbReference type="HAMAP" id="MF_00057">
    <property type="entry name" value="KdsB"/>
    <property type="match status" value="1"/>
</dbReference>
<dbReference type="InterPro" id="IPR003329">
    <property type="entry name" value="Cytidylyl_trans"/>
</dbReference>
<dbReference type="InterPro" id="IPR004528">
    <property type="entry name" value="KdsB"/>
</dbReference>
<dbReference type="InterPro" id="IPR029044">
    <property type="entry name" value="Nucleotide-diphossugar_trans"/>
</dbReference>
<dbReference type="NCBIfam" id="TIGR00466">
    <property type="entry name" value="kdsB"/>
    <property type="match status" value="1"/>
</dbReference>
<dbReference type="NCBIfam" id="NF003948">
    <property type="entry name" value="PRK05450.1-1"/>
    <property type="match status" value="1"/>
</dbReference>
<dbReference type="NCBIfam" id="NF003952">
    <property type="entry name" value="PRK05450.1-5"/>
    <property type="match status" value="1"/>
</dbReference>
<dbReference type="PANTHER" id="PTHR42866">
    <property type="entry name" value="3-DEOXY-MANNO-OCTULOSONATE CYTIDYLYLTRANSFERASE"/>
    <property type="match status" value="1"/>
</dbReference>
<dbReference type="PANTHER" id="PTHR42866:SF2">
    <property type="entry name" value="3-DEOXY-MANNO-OCTULOSONATE CYTIDYLYLTRANSFERASE, MITOCHONDRIAL"/>
    <property type="match status" value="1"/>
</dbReference>
<dbReference type="Pfam" id="PF02348">
    <property type="entry name" value="CTP_transf_3"/>
    <property type="match status" value="1"/>
</dbReference>
<dbReference type="SUPFAM" id="SSF53448">
    <property type="entry name" value="Nucleotide-diphospho-sugar transferases"/>
    <property type="match status" value="1"/>
</dbReference>